<gene>
    <name evidence="1" type="primary">lon2</name>
    <name type="ordered locus">Tcr_1548</name>
</gene>
<accession>Q31FD3</accession>
<feature type="chain" id="PRO_0000396612" description="Lon protease 2">
    <location>
        <begin position="1"/>
        <end position="878"/>
    </location>
</feature>
<feature type="domain" description="Lon N-terminal" evidence="3">
    <location>
        <begin position="85"/>
        <end position="281"/>
    </location>
</feature>
<feature type="domain" description="Lon proteolytic" evidence="2">
    <location>
        <begin position="668"/>
        <end position="850"/>
    </location>
</feature>
<feature type="active site" evidence="1">
    <location>
        <position position="756"/>
    </location>
</feature>
<feature type="active site" evidence="1">
    <location>
        <position position="799"/>
    </location>
</feature>
<feature type="binding site" evidence="1">
    <location>
        <begin position="434"/>
        <end position="441"/>
    </location>
    <ligand>
        <name>ATP</name>
        <dbReference type="ChEBI" id="CHEBI:30616"/>
    </ligand>
</feature>
<keyword id="KW-0067">ATP-binding</keyword>
<keyword id="KW-0963">Cytoplasm</keyword>
<keyword id="KW-0378">Hydrolase</keyword>
<keyword id="KW-0547">Nucleotide-binding</keyword>
<keyword id="KW-0645">Protease</keyword>
<keyword id="KW-0720">Serine protease</keyword>
<keyword id="KW-0346">Stress response</keyword>
<sequence length="878" mass="98966">MTYHNDSTDLETLEIQELETEMDDSMHEEDIEFNEFVDNTSEFEEAESNQQNEAIDGEHIANDQSDMDSTMTQLVTANSSKPDSLYLLPVKERPFFPGQTLPIILDKNSWSKTIKKVIDEKIHYIGIIYVEADDHHKAKPKDFAKTGTLIRIHEPKIKEDYIQLIAEGVCRFQIADWLSSSAPFRARVNYPNDIRNGSPKEFKAYGLAIMNAFKELLPLNPLYSEELKYFLNRYSASDSQHLADFAASLTAASNEKLQDLLDTLDLSERLEKVLSLFKHEIEVTKLQFNIRERVEENLSQQQREFFLHQQLKEIQKELGMVKDDRTADADLFQERLDKLELSEEATKKAEEELGKINMLDPQSPEYGVARNWLDWLTQLPWGKYSDDKLDLGRARKILNKGHDGLDDVKDRILEFLAVGALKGEISGSIICLVGPPGVGKTSIGRSIADTLGRKFYRFSVGGMRDEAEIKGHRRTYIGAMPGKFVQALKDCETANPVIMLDEIDKIGSSYQGDPASALLEVLDPEQNSEFMDHYMDVRFDLSKTLFVCTANTLDSIPGPLLDRMEVIRLSGYITEEKIQIAKHHLWPSLLEDAGLNKKQIQITPATIRHVIEGYAREAGVRNLKKQLAKLIRKLAIKFVNGDMEQTTLHVNDLEEMLGQPRFTPEKTNQQMGTVTGLAWTSMGGATLTIEASRVHTLNRGFKLSGQLGDVMQESASIAYSYIASNLDKYKADPEFFDKAFVHLHVPDGATPKDGPSAGVTMATALLSLARNEAIKKPLAMTGELSLTGQVLPVGGIREKVIAARRVGIKELILPDENRKDYDELPDYLKEGMTLHFAKHFDDVAKLTFHIRSKSSALKKYLSKAVISTEEKTEQETTS</sequence>
<dbReference type="EC" id="3.4.21.53" evidence="1"/>
<dbReference type="EMBL" id="CP000109">
    <property type="protein sequence ID" value="ABB42140.2"/>
    <property type="molecule type" value="Genomic_DNA"/>
</dbReference>
<dbReference type="SMR" id="Q31FD3"/>
<dbReference type="STRING" id="317025.Tcr_1548"/>
<dbReference type="KEGG" id="tcx:Tcr_1548"/>
<dbReference type="eggNOG" id="COG0466">
    <property type="taxonomic scope" value="Bacteria"/>
</dbReference>
<dbReference type="HOGENOM" id="CLU_004109_4_3_6"/>
<dbReference type="GO" id="GO:0005737">
    <property type="term" value="C:cytoplasm"/>
    <property type="evidence" value="ECO:0007669"/>
    <property type="project" value="UniProtKB-SubCell"/>
</dbReference>
<dbReference type="GO" id="GO:0005524">
    <property type="term" value="F:ATP binding"/>
    <property type="evidence" value="ECO:0007669"/>
    <property type="project" value="UniProtKB-UniRule"/>
</dbReference>
<dbReference type="GO" id="GO:0016887">
    <property type="term" value="F:ATP hydrolysis activity"/>
    <property type="evidence" value="ECO:0007669"/>
    <property type="project" value="UniProtKB-UniRule"/>
</dbReference>
<dbReference type="GO" id="GO:0004176">
    <property type="term" value="F:ATP-dependent peptidase activity"/>
    <property type="evidence" value="ECO:0007669"/>
    <property type="project" value="UniProtKB-UniRule"/>
</dbReference>
<dbReference type="GO" id="GO:0043565">
    <property type="term" value="F:sequence-specific DNA binding"/>
    <property type="evidence" value="ECO:0007669"/>
    <property type="project" value="UniProtKB-UniRule"/>
</dbReference>
<dbReference type="GO" id="GO:0004252">
    <property type="term" value="F:serine-type endopeptidase activity"/>
    <property type="evidence" value="ECO:0007669"/>
    <property type="project" value="UniProtKB-UniRule"/>
</dbReference>
<dbReference type="GO" id="GO:0034605">
    <property type="term" value="P:cellular response to heat"/>
    <property type="evidence" value="ECO:0007669"/>
    <property type="project" value="UniProtKB-UniRule"/>
</dbReference>
<dbReference type="GO" id="GO:0006515">
    <property type="term" value="P:protein quality control for misfolded or incompletely synthesized proteins"/>
    <property type="evidence" value="ECO:0007669"/>
    <property type="project" value="UniProtKB-UniRule"/>
</dbReference>
<dbReference type="CDD" id="cd19500">
    <property type="entry name" value="RecA-like_Lon"/>
    <property type="match status" value="1"/>
</dbReference>
<dbReference type="FunFam" id="1.20.5.5270:FF:000002">
    <property type="entry name" value="Lon protease homolog"/>
    <property type="match status" value="1"/>
</dbReference>
<dbReference type="FunFam" id="3.40.50.300:FF:000021">
    <property type="entry name" value="Lon protease homolog"/>
    <property type="match status" value="1"/>
</dbReference>
<dbReference type="Gene3D" id="1.10.8.60">
    <property type="match status" value="1"/>
</dbReference>
<dbReference type="Gene3D" id="1.20.5.5270">
    <property type="match status" value="1"/>
</dbReference>
<dbReference type="Gene3D" id="1.20.58.1480">
    <property type="match status" value="1"/>
</dbReference>
<dbReference type="Gene3D" id="3.30.230.10">
    <property type="match status" value="1"/>
</dbReference>
<dbReference type="Gene3D" id="2.30.130.40">
    <property type="entry name" value="LON domain-like"/>
    <property type="match status" value="1"/>
</dbReference>
<dbReference type="Gene3D" id="3.40.50.300">
    <property type="entry name" value="P-loop containing nucleotide triphosphate hydrolases"/>
    <property type="match status" value="1"/>
</dbReference>
<dbReference type="HAMAP" id="MF_01973">
    <property type="entry name" value="lon_bact"/>
    <property type="match status" value="1"/>
</dbReference>
<dbReference type="InterPro" id="IPR003593">
    <property type="entry name" value="AAA+_ATPase"/>
</dbReference>
<dbReference type="InterPro" id="IPR003959">
    <property type="entry name" value="ATPase_AAA_core"/>
</dbReference>
<dbReference type="InterPro" id="IPR027543">
    <property type="entry name" value="Lon_bac"/>
</dbReference>
<dbReference type="InterPro" id="IPR004815">
    <property type="entry name" value="Lon_bac/euk-typ"/>
</dbReference>
<dbReference type="InterPro" id="IPR054594">
    <property type="entry name" value="Lon_lid"/>
</dbReference>
<dbReference type="InterPro" id="IPR008269">
    <property type="entry name" value="Lon_proteolytic"/>
</dbReference>
<dbReference type="InterPro" id="IPR027065">
    <property type="entry name" value="Lon_Prtase"/>
</dbReference>
<dbReference type="InterPro" id="IPR003111">
    <property type="entry name" value="Lon_prtase_N"/>
</dbReference>
<dbReference type="InterPro" id="IPR046336">
    <property type="entry name" value="Lon_prtase_N_sf"/>
</dbReference>
<dbReference type="InterPro" id="IPR027417">
    <property type="entry name" value="P-loop_NTPase"/>
</dbReference>
<dbReference type="InterPro" id="IPR008268">
    <property type="entry name" value="Peptidase_S16_AS"/>
</dbReference>
<dbReference type="InterPro" id="IPR015947">
    <property type="entry name" value="PUA-like_sf"/>
</dbReference>
<dbReference type="InterPro" id="IPR020568">
    <property type="entry name" value="Ribosomal_Su5_D2-typ_SF"/>
</dbReference>
<dbReference type="InterPro" id="IPR014721">
    <property type="entry name" value="Ribsml_uS5_D2-typ_fold_subgr"/>
</dbReference>
<dbReference type="NCBIfam" id="TIGR00763">
    <property type="entry name" value="lon"/>
    <property type="match status" value="1"/>
</dbReference>
<dbReference type="PANTHER" id="PTHR43718">
    <property type="entry name" value="LON PROTEASE"/>
    <property type="match status" value="1"/>
</dbReference>
<dbReference type="PANTHER" id="PTHR43718:SF2">
    <property type="entry name" value="LON PROTEASE HOMOLOG, MITOCHONDRIAL"/>
    <property type="match status" value="1"/>
</dbReference>
<dbReference type="Pfam" id="PF00004">
    <property type="entry name" value="AAA"/>
    <property type="match status" value="1"/>
</dbReference>
<dbReference type="Pfam" id="PF05362">
    <property type="entry name" value="Lon_C"/>
    <property type="match status" value="1"/>
</dbReference>
<dbReference type="Pfam" id="PF22667">
    <property type="entry name" value="Lon_lid"/>
    <property type="match status" value="1"/>
</dbReference>
<dbReference type="Pfam" id="PF02190">
    <property type="entry name" value="LON_substr_bdg"/>
    <property type="match status" value="1"/>
</dbReference>
<dbReference type="PIRSF" id="PIRSF001174">
    <property type="entry name" value="Lon_proteas"/>
    <property type="match status" value="1"/>
</dbReference>
<dbReference type="PRINTS" id="PR00830">
    <property type="entry name" value="ENDOLAPTASE"/>
</dbReference>
<dbReference type="SMART" id="SM00382">
    <property type="entry name" value="AAA"/>
    <property type="match status" value="1"/>
</dbReference>
<dbReference type="SMART" id="SM00464">
    <property type="entry name" value="LON"/>
    <property type="match status" value="1"/>
</dbReference>
<dbReference type="SUPFAM" id="SSF52540">
    <property type="entry name" value="P-loop containing nucleoside triphosphate hydrolases"/>
    <property type="match status" value="1"/>
</dbReference>
<dbReference type="SUPFAM" id="SSF88697">
    <property type="entry name" value="PUA domain-like"/>
    <property type="match status" value="1"/>
</dbReference>
<dbReference type="SUPFAM" id="SSF54211">
    <property type="entry name" value="Ribosomal protein S5 domain 2-like"/>
    <property type="match status" value="1"/>
</dbReference>
<dbReference type="PROSITE" id="PS51787">
    <property type="entry name" value="LON_N"/>
    <property type="match status" value="1"/>
</dbReference>
<dbReference type="PROSITE" id="PS51786">
    <property type="entry name" value="LON_PROTEOLYTIC"/>
    <property type="match status" value="1"/>
</dbReference>
<dbReference type="PROSITE" id="PS01046">
    <property type="entry name" value="LON_SER"/>
    <property type="match status" value="1"/>
</dbReference>
<proteinExistence type="inferred from homology"/>
<protein>
    <recommendedName>
        <fullName evidence="1">Lon protease 2</fullName>
        <ecNumber evidence="1">3.4.21.53</ecNumber>
    </recommendedName>
    <alternativeName>
        <fullName evidence="1">ATP-dependent protease La 2</fullName>
    </alternativeName>
</protein>
<name>LON2_HYDCU</name>
<organism>
    <name type="scientific">Hydrogenovibrio crunogenus (strain DSM 25203 / XCL-2)</name>
    <name type="common">Thiomicrospira crunogena</name>
    <dbReference type="NCBI Taxonomy" id="317025"/>
    <lineage>
        <taxon>Bacteria</taxon>
        <taxon>Pseudomonadati</taxon>
        <taxon>Pseudomonadota</taxon>
        <taxon>Gammaproteobacteria</taxon>
        <taxon>Thiotrichales</taxon>
        <taxon>Piscirickettsiaceae</taxon>
        <taxon>Hydrogenovibrio</taxon>
    </lineage>
</organism>
<evidence type="ECO:0000255" key="1">
    <source>
        <dbReference type="HAMAP-Rule" id="MF_01973"/>
    </source>
</evidence>
<evidence type="ECO:0000255" key="2">
    <source>
        <dbReference type="PROSITE-ProRule" id="PRU01122"/>
    </source>
</evidence>
<evidence type="ECO:0000255" key="3">
    <source>
        <dbReference type="PROSITE-ProRule" id="PRU01123"/>
    </source>
</evidence>
<reference key="1">
    <citation type="journal article" date="2006" name="PLoS Biol.">
        <title>The genome of deep-sea vent chemolithoautotroph Thiomicrospira crunogena XCL-2.</title>
        <authorList>
            <person name="Scott K.M."/>
            <person name="Sievert S.M."/>
            <person name="Abril F.N."/>
            <person name="Ball L.A."/>
            <person name="Barrett C.J."/>
            <person name="Blake R.A."/>
            <person name="Boller A.J."/>
            <person name="Chain P.S.G."/>
            <person name="Clark J.A."/>
            <person name="Davis C.R."/>
            <person name="Detter C."/>
            <person name="Do K.F."/>
            <person name="Dobrinski K.P."/>
            <person name="Faza B.I."/>
            <person name="Fitzpatrick K.A."/>
            <person name="Freyermuth S.K."/>
            <person name="Harmer T.L."/>
            <person name="Hauser L.J."/>
            <person name="Huegler M."/>
            <person name="Kerfeld C.A."/>
            <person name="Klotz M.G."/>
            <person name="Kong W.W."/>
            <person name="Land M."/>
            <person name="Lapidus A."/>
            <person name="Larimer F.W."/>
            <person name="Longo D.L."/>
            <person name="Lucas S."/>
            <person name="Malfatti S.A."/>
            <person name="Massey S.E."/>
            <person name="Martin D.D."/>
            <person name="McCuddin Z."/>
            <person name="Meyer F."/>
            <person name="Moore J.L."/>
            <person name="Ocampo L.H. Jr."/>
            <person name="Paul J.H."/>
            <person name="Paulsen I.T."/>
            <person name="Reep D.K."/>
            <person name="Ren Q."/>
            <person name="Ross R.L."/>
            <person name="Sato P.Y."/>
            <person name="Thomas P."/>
            <person name="Tinkham L.E."/>
            <person name="Zeruth G.T."/>
        </authorList>
    </citation>
    <scope>NUCLEOTIDE SEQUENCE [LARGE SCALE GENOMIC DNA]</scope>
    <source>
        <strain>DSM 25203 / XCL-2</strain>
    </source>
</reference>
<comment type="function">
    <text evidence="1">ATP-dependent serine protease that mediates the selective degradation of mutant and abnormal proteins as well as certain short-lived regulatory proteins. Required for cellular homeostasis and for survival from DNA damage and developmental changes induced by stress. Degrades polypeptides processively to yield small peptide fragments that are 5 to 10 amino acids long. Binds to DNA in a double-stranded, site-specific manner.</text>
</comment>
<comment type="catalytic activity">
    <reaction evidence="1">
        <text>Hydrolysis of proteins in presence of ATP.</text>
        <dbReference type="EC" id="3.4.21.53"/>
    </reaction>
</comment>
<comment type="subunit">
    <text evidence="1">Homohexamer. Organized in a ring with a central cavity.</text>
</comment>
<comment type="subcellular location">
    <subcellularLocation>
        <location evidence="1">Cytoplasm</location>
    </subcellularLocation>
</comment>
<comment type="induction">
    <text evidence="1">By heat shock.</text>
</comment>
<comment type="similarity">
    <text evidence="1">Belongs to the peptidase S16 family.</text>
</comment>